<feature type="chain" id="PRO_1000046433" description="Phosphoribosylformylglycinamidine cyclo-ligase">
    <location>
        <begin position="1"/>
        <end position="331"/>
    </location>
</feature>
<dbReference type="EC" id="6.3.3.1" evidence="1"/>
<dbReference type="EMBL" id="CP000728">
    <property type="protein sequence ID" value="ABS41211.1"/>
    <property type="molecule type" value="Genomic_DNA"/>
</dbReference>
<dbReference type="RefSeq" id="WP_012100667.1">
    <property type="nucleotide sequence ID" value="NC_009699.1"/>
</dbReference>
<dbReference type="SMR" id="A7GH98"/>
<dbReference type="KEGG" id="cbf:CLI_2933"/>
<dbReference type="HOGENOM" id="CLU_047116_0_0_9"/>
<dbReference type="UniPathway" id="UPA00074">
    <property type="reaction ID" value="UER00129"/>
</dbReference>
<dbReference type="Proteomes" id="UP000002410">
    <property type="component" value="Chromosome"/>
</dbReference>
<dbReference type="GO" id="GO:0005829">
    <property type="term" value="C:cytosol"/>
    <property type="evidence" value="ECO:0007669"/>
    <property type="project" value="TreeGrafter"/>
</dbReference>
<dbReference type="GO" id="GO:0005524">
    <property type="term" value="F:ATP binding"/>
    <property type="evidence" value="ECO:0007669"/>
    <property type="project" value="UniProtKB-KW"/>
</dbReference>
<dbReference type="GO" id="GO:0004637">
    <property type="term" value="F:phosphoribosylamine-glycine ligase activity"/>
    <property type="evidence" value="ECO:0007669"/>
    <property type="project" value="TreeGrafter"/>
</dbReference>
<dbReference type="GO" id="GO:0004641">
    <property type="term" value="F:phosphoribosylformylglycinamidine cyclo-ligase activity"/>
    <property type="evidence" value="ECO:0007669"/>
    <property type="project" value="UniProtKB-UniRule"/>
</dbReference>
<dbReference type="GO" id="GO:0006189">
    <property type="term" value="P:'de novo' IMP biosynthetic process"/>
    <property type="evidence" value="ECO:0007669"/>
    <property type="project" value="UniProtKB-UniRule"/>
</dbReference>
<dbReference type="GO" id="GO:0046084">
    <property type="term" value="P:adenine biosynthetic process"/>
    <property type="evidence" value="ECO:0007669"/>
    <property type="project" value="TreeGrafter"/>
</dbReference>
<dbReference type="CDD" id="cd02196">
    <property type="entry name" value="PurM"/>
    <property type="match status" value="1"/>
</dbReference>
<dbReference type="FunFam" id="3.30.1330.10:FF:000001">
    <property type="entry name" value="Phosphoribosylformylglycinamidine cyclo-ligase"/>
    <property type="match status" value="1"/>
</dbReference>
<dbReference type="FunFam" id="3.90.650.10:FF:000011">
    <property type="entry name" value="Phosphoribosylformylglycinamidine cyclo-ligase"/>
    <property type="match status" value="1"/>
</dbReference>
<dbReference type="Gene3D" id="3.90.650.10">
    <property type="entry name" value="PurM-like C-terminal domain"/>
    <property type="match status" value="1"/>
</dbReference>
<dbReference type="Gene3D" id="3.30.1330.10">
    <property type="entry name" value="PurM-like, N-terminal domain"/>
    <property type="match status" value="1"/>
</dbReference>
<dbReference type="HAMAP" id="MF_00741">
    <property type="entry name" value="AIRS"/>
    <property type="match status" value="1"/>
</dbReference>
<dbReference type="InterPro" id="IPR010918">
    <property type="entry name" value="PurM-like_C_dom"/>
</dbReference>
<dbReference type="InterPro" id="IPR036676">
    <property type="entry name" value="PurM-like_C_sf"/>
</dbReference>
<dbReference type="InterPro" id="IPR016188">
    <property type="entry name" value="PurM-like_N"/>
</dbReference>
<dbReference type="InterPro" id="IPR036921">
    <property type="entry name" value="PurM-like_N_sf"/>
</dbReference>
<dbReference type="InterPro" id="IPR004733">
    <property type="entry name" value="PurM_cligase"/>
</dbReference>
<dbReference type="NCBIfam" id="TIGR00878">
    <property type="entry name" value="purM"/>
    <property type="match status" value="1"/>
</dbReference>
<dbReference type="PANTHER" id="PTHR10520:SF12">
    <property type="entry name" value="TRIFUNCTIONAL PURINE BIOSYNTHETIC PROTEIN ADENOSINE-3"/>
    <property type="match status" value="1"/>
</dbReference>
<dbReference type="PANTHER" id="PTHR10520">
    <property type="entry name" value="TRIFUNCTIONAL PURINE BIOSYNTHETIC PROTEIN ADENOSINE-3-RELATED"/>
    <property type="match status" value="1"/>
</dbReference>
<dbReference type="Pfam" id="PF00586">
    <property type="entry name" value="AIRS"/>
    <property type="match status" value="1"/>
</dbReference>
<dbReference type="Pfam" id="PF02769">
    <property type="entry name" value="AIRS_C"/>
    <property type="match status" value="1"/>
</dbReference>
<dbReference type="SUPFAM" id="SSF56042">
    <property type="entry name" value="PurM C-terminal domain-like"/>
    <property type="match status" value="1"/>
</dbReference>
<dbReference type="SUPFAM" id="SSF55326">
    <property type="entry name" value="PurM N-terminal domain-like"/>
    <property type="match status" value="1"/>
</dbReference>
<evidence type="ECO:0000255" key="1">
    <source>
        <dbReference type="HAMAP-Rule" id="MF_00741"/>
    </source>
</evidence>
<reference key="1">
    <citation type="submission" date="2007-06" db="EMBL/GenBank/DDBJ databases">
        <authorList>
            <person name="Brinkac L.M."/>
            <person name="Daugherty S."/>
            <person name="Dodson R.J."/>
            <person name="Madupu R."/>
            <person name="Brown J.L."/>
            <person name="Bruce D."/>
            <person name="Detter C."/>
            <person name="Munk C."/>
            <person name="Smith L.A."/>
            <person name="Smith T.J."/>
            <person name="White O."/>
            <person name="Brettin T.S."/>
        </authorList>
    </citation>
    <scope>NUCLEOTIDE SEQUENCE [LARGE SCALE GENOMIC DNA]</scope>
    <source>
        <strain>Langeland / NCTC 10281 / Type F</strain>
    </source>
</reference>
<organism>
    <name type="scientific">Clostridium botulinum (strain Langeland / NCTC 10281 / Type F)</name>
    <dbReference type="NCBI Taxonomy" id="441772"/>
    <lineage>
        <taxon>Bacteria</taxon>
        <taxon>Bacillati</taxon>
        <taxon>Bacillota</taxon>
        <taxon>Clostridia</taxon>
        <taxon>Eubacteriales</taxon>
        <taxon>Clostridiaceae</taxon>
        <taxon>Clostridium</taxon>
    </lineage>
</organism>
<comment type="catalytic activity">
    <reaction evidence="1">
        <text>2-formamido-N(1)-(5-O-phospho-beta-D-ribosyl)acetamidine + ATP = 5-amino-1-(5-phospho-beta-D-ribosyl)imidazole + ADP + phosphate + H(+)</text>
        <dbReference type="Rhea" id="RHEA:23032"/>
        <dbReference type="ChEBI" id="CHEBI:15378"/>
        <dbReference type="ChEBI" id="CHEBI:30616"/>
        <dbReference type="ChEBI" id="CHEBI:43474"/>
        <dbReference type="ChEBI" id="CHEBI:137981"/>
        <dbReference type="ChEBI" id="CHEBI:147287"/>
        <dbReference type="ChEBI" id="CHEBI:456216"/>
        <dbReference type="EC" id="6.3.3.1"/>
    </reaction>
</comment>
<comment type="pathway">
    <text evidence="1">Purine metabolism; IMP biosynthesis via de novo pathway; 5-amino-1-(5-phospho-D-ribosyl)imidazole from N(2)-formyl-N(1)-(5-phospho-D-ribosyl)glycinamide: step 2/2.</text>
</comment>
<comment type="subcellular location">
    <subcellularLocation>
        <location evidence="1">Cytoplasm</location>
    </subcellularLocation>
</comment>
<comment type="similarity">
    <text evidence="1">Belongs to the AIR synthase family.</text>
</comment>
<name>PUR5_CLOBL</name>
<accession>A7GH98</accession>
<protein>
    <recommendedName>
        <fullName evidence="1">Phosphoribosylformylglycinamidine cyclo-ligase</fullName>
        <ecNumber evidence="1">6.3.3.1</ecNumber>
    </recommendedName>
    <alternativeName>
        <fullName evidence="1">AIR synthase</fullName>
    </alternativeName>
    <alternativeName>
        <fullName evidence="1">AIRS</fullName>
    </alternativeName>
    <alternativeName>
        <fullName evidence="1">Phosphoribosyl-aminoimidazole synthetase</fullName>
    </alternativeName>
</protein>
<gene>
    <name evidence="1" type="primary">purM</name>
    <name type="ordered locus">CLI_2933</name>
</gene>
<keyword id="KW-0067">ATP-binding</keyword>
<keyword id="KW-0963">Cytoplasm</keyword>
<keyword id="KW-0436">Ligase</keyword>
<keyword id="KW-0547">Nucleotide-binding</keyword>
<keyword id="KW-0658">Purine biosynthesis</keyword>
<proteinExistence type="inferred from homology"/>
<sequence length="331" mass="36349">MVSYKEAGVNIEEGYKSVDLIKKYASKTFTKGVLNNLGSFAGMFELPKYKNPVLVSGTDGVGTKLDIAFRMKKYNTVGIDCVAMCINDILCHGAKPLFFLDYIACGKLESEIAAQLVEGVSNGCIQSECALIGGETAEMPGFYRDGEYDIAGFAVGIAEKDEIIDGSKIEDGDILIGIASSGPHSNGYSLIRKLVEDLHKDFEGNKIGNTLLTPTKIYVKPVMKLLEKYNIKGMAHVTGGGFYENIPRMFKEDFTAVINKKSYPLPNIFSHLMSLGIEEDHMYNTFNMGIGFVLCVNEKDGENIIKDLIEMGEKGYKIGYVKKGNKSVELI</sequence>